<reference key="1">
    <citation type="submission" date="2004-11" db="EMBL/GenBank/DDBJ databases">
        <authorList>
            <consortium name="The German cDNA consortium"/>
        </authorList>
    </citation>
    <scope>NUCLEOTIDE SEQUENCE [LARGE SCALE MRNA]</scope>
    <source>
        <tissue>Brain cortex</tissue>
    </source>
</reference>
<accession>Q5R5R5</accession>
<feature type="initiator methionine" description="Removed" evidence="2">
    <location>
        <position position="1"/>
    </location>
</feature>
<feature type="chain" id="PRO_0000089967" description="CCHC-type zinc finger nucleic acid binding protein">
    <location>
        <begin position="2"/>
        <end position="177"/>
    </location>
</feature>
<feature type="zinc finger region" description="CCHC-type 1" evidence="4">
    <location>
        <begin position="4"/>
        <end position="21"/>
    </location>
</feature>
<feature type="zinc finger region" description="CCHC-type 2" evidence="4">
    <location>
        <begin position="52"/>
        <end position="69"/>
    </location>
</feature>
<feature type="zinc finger region" description="CCHC-type 3" evidence="4">
    <location>
        <begin position="72"/>
        <end position="89"/>
    </location>
</feature>
<feature type="zinc finger region" description="CCHC-type 4" evidence="4">
    <location>
        <begin position="96"/>
        <end position="113"/>
    </location>
</feature>
<feature type="zinc finger region" description="CCHC-type 5" evidence="4">
    <location>
        <begin position="117"/>
        <end position="134"/>
    </location>
</feature>
<feature type="zinc finger region" description="CCHC-type 6" evidence="4">
    <location>
        <begin position="135"/>
        <end position="152"/>
    </location>
</feature>
<feature type="zinc finger region" description="CCHC-type 7" evidence="4">
    <location>
        <begin position="156"/>
        <end position="173"/>
    </location>
</feature>
<feature type="region of interest" description="RNA-binding Arg/Gly-rich region (RGG-box)" evidence="2">
    <location>
        <begin position="25"/>
        <end position="38"/>
    </location>
</feature>
<feature type="modified residue" description="N-acetylserine" evidence="2">
    <location>
        <position position="2"/>
    </location>
</feature>
<feature type="modified residue" description="N6-acetyllysine" evidence="1">
    <location>
        <position position="8"/>
    </location>
</feature>
<feature type="modified residue" description="Omega-N-methylarginine; by PRMT1" evidence="2">
    <location>
        <position position="25"/>
    </location>
</feature>
<feature type="modified residue" description="Omega-N-methylarginine; by PRMT1" evidence="2">
    <location>
        <position position="27"/>
    </location>
</feature>
<feature type="modified residue" description="Phosphoserine" evidence="1">
    <location>
        <position position="49"/>
    </location>
</feature>
<feature type="modified residue" description="Omega-N-methylarginine" evidence="2">
    <location>
        <position position="79"/>
    </location>
</feature>
<protein>
    <recommendedName>
        <fullName evidence="5">CCHC-type zinc finger nucleic acid binding protein</fullName>
    </recommendedName>
    <alternativeName>
        <fullName evidence="5">Cellular nucleic acid-binding protein</fullName>
        <shortName evidence="5">CNBP</shortName>
    </alternativeName>
    <alternativeName>
        <fullName>Zinc finger protein 9</fullName>
    </alternativeName>
</protein>
<dbReference type="EMBL" id="CR860791">
    <property type="protein sequence ID" value="CAH92901.1"/>
    <property type="molecule type" value="mRNA"/>
</dbReference>
<dbReference type="RefSeq" id="NP_001126703.1">
    <property type="nucleotide sequence ID" value="NM_001133231.1"/>
</dbReference>
<dbReference type="FunCoup" id="Q5R5R5">
    <property type="interactions" value="2954"/>
</dbReference>
<dbReference type="STRING" id="9601.ENSPPYP00000015013"/>
<dbReference type="Ensembl" id="ENSPPYT00000015613.3">
    <property type="protein sequence ID" value="ENSPPYP00000015013.2"/>
    <property type="gene ID" value="ENSPPYG00000013423.3"/>
</dbReference>
<dbReference type="GeneID" id="100173703"/>
<dbReference type="KEGG" id="pon:100173703"/>
<dbReference type="CTD" id="7555"/>
<dbReference type="eggNOG" id="KOG4400">
    <property type="taxonomic scope" value="Eukaryota"/>
</dbReference>
<dbReference type="GeneTree" id="ENSGT00950000183041"/>
<dbReference type="HOGENOM" id="CLU_058879_4_0_1"/>
<dbReference type="InParanoid" id="Q5R5R5"/>
<dbReference type="OMA" id="KGNPTCY"/>
<dbReference type="OrthoDB" id="427960at2759"/>
<dbReference type="TreeFam" id="TF316974"/>
<dbReference type="Proteomes" id="UP000001595">
    <property type="component" value="Chromosome 3"/>
</dbReference>
<dbReference type="GO" id="GO:0005829">
    <property type="term" value="C:cytosol"/>
    <property type="evidence" value="ECO:0000250"/>
    <property type="project" value="UniProtKB"/>
</dbReference>
<dbReference type="GO" id="GO:0005783">
    <property type="term" value="C:endoplasmic reticulum"/>
    <property type="evidence" value="ECO:0000250"/>
    <property type="project" value="UniProtKB"/>
</dbReference>
<dbReference type="GO" id="GO:0051880">
    <property type="term" value="F:G-quadruplex DNA binding"/>
    <property type="evidence" value="ECO:0007669"/>
    <property type="project" value="Ensembl"/>
</dbReference>
<dbReference type="GO" id="GO:0008270">
    <property type="term" value="F:zinc ion binding"/>
    <property type="evidence" value="ECO:0007669"/>
    <property type="project" value="UniProtKB-KW"/>
</dbReference>
<dbReference type="GO" id="GO:0071919">
    <property type="term" value="P:G-quadruplex DNA formation"/>
    <property type="evidence" value="ECO:0007669"/>
    <property type="project" value="Ensembl"/>
</dbReference>
<dbReference type="GO" id="GO:0000122">
    <property type="term" value="P:negative regulation of transcription by RNA polymerase II"/>
    <property type="evidence" value="ECO:0007669"/>
    <property type="project" value="Ensembl"/>
</dbReference>
<dbReference type="GO" id="GO:0008284">
    <property type="term" value="P:positive regulation of cell population proliferation"/>
    <property type="evidence" value="ECO:0000250"/>
    <property type="project" value="UniProtKB"/>
</dbReference>
<dbReference type="GO" id="GO:0045893">
    <property type="term" value="P:positive regulation of DNA-templated transcription"/>
    <property type="evidence" value="ECO:0000250"/>
    <property type="project" value="UniProtKB"/>
</dbReference>
<dbReference type="GO" id="GO:0045944">
    <property type="term" value="P:positive regulation of transcription by RNA polymerase II"/>
    <property type="evidence" value="ECO:0000250"/>
    <property type="project" value="UniProtKB"/>
</dbReference>
<dbReference type="FunFam" id="4.10.60.10:FF:000002">
    <property type="entry name" value="cellular nucleic acid-binding protein-like isoform X1"/>
    <property type="match status" value="2"/>
</dbReference>
<dbReference type="FunFam" id="4.10.60.10:FF:000006">
    <property type="entry name" value="cellular nucleic acid-binding protein-like isoform X1"/>
    <property type="match status" value="1"/>
</dbReference>
<dbReference type="FunFam" id="4.10.60.10:FF:000026">
    <property type="entry name" value="cellular nucleic acid-binding protein-like isoform X1"/>
    <property type="match status" value="1"/>
</dbReference>
<dbReference type="Gene3D" id="4.10.60.10">
    <property type="entry name" value="Zinc finger, CCHC-type"/>
    <property type="match status" value="5"/>
</dbReference>
<dbReference type="InterPro" id="IPR001878">
    <property type="entry name" value="Znf_CCHC"/>
</dbReference>
<dbReference type="InterPro" id="IPR036875">
    <property type="entry name" value="Znf_CCHC_sf"/>
</dbReference>
<dbReference type="PANTHER" id="PTHR47103">
    <property type="entry name" value="DNA-BINDING PROTEIN"/>
    <property type="match status" value="1"/>
</dbReference>
<dbReference type="PANTHER" id="PTHR47103:SF8">
    <property type="entry name" value="DNA-BINDING PROTEIN"/>
    <property type="match status" value="1"/>
</dbReference>
<dbReference type="Pfam" id="PF00098">
    <property type="entry name" value="zf-CCHC"/>
    <property type="match status" value="7"/>
</dbReference>
<dbReference type="SMART" id="SM00343">
    <property type="entry name" value="ZnF_C2HC"/>
    <property type="match status" value="7"/>
</dbReference>
<dbReference type="SUPFAM" id="SSF57756">
    <property type="entry name" value="Retrovirus zinc finger-like domains"/>
    <property type="match status" value="4"/>
</dbReference>
<dbReference type="PROSITE" id="PS50158">
    <property type="entry name" value="ZF_CCHC"/>
    <property type="match status" value="7"/>
</dbReference>
<name>CNBP_PONAB</name>
<gene>
    <name type="primary">CNBP</name>
    <name type="synonym">ZNF9</name>
</gene>
<organism>
    <name type="scientific">Pongo abelii</name>
    <name type="common">Sumatran orangutan</name>
    <name type="synonym">Pongo pygmaeus abelii</name>
    <dbReference type="NCBI Taxonomy" id="9601"/>
    <lineage>
        <taxon>Eukaryota</taxon>
        <taxon>Metazoa</taxon>
        <taxon>Chordata</taxon>
        <taxon>Craniata</taxon>
        <taxon>Vertebrata</taxon>
        <taxon>Euteleostomi</taxon>
        <taxon>Mammalia</taxon>
        <taxon>Eutheria</taxon>
        <taxon>Euarchontoglires</taxon>
        <taxon>Primates</taxon>
        <taxon>Haplorrhini</taxon>
        <taxon>Catarrhini</taxon>
        <taxon>Hominidae</taxon>
        <taxon>Pongo</taxon>
    </lineage>
</organism>
<keyword id="KW-0007">Acetylation</keyword>
<keyword id="KW-0963">Cytoplasm</keyword>
<keyword id="KW-0238">DNA-binding</keyword>
<keyword id="KW-0256">Endoplasmic reticulum</keyword>
<keyword id="KW-0479">Metal-binding</keyword>
<keyword id="KW-0488">Methylation</keyword>
<keyword id="KW-0539">Nucleus</keyword>
<keyword id="KW-0597">Phosphoprotein</keyword>
<keyword id="KW-1185">Reference proteome</keyword>
<keyword id="KW-0677">Repeat</keyword>
<keyword id="KW-0678">Repressor</keyword>
<keyword id="KW-0804">Transcription</keyword>
<keyword id="KW-0805">Transcription regulation</keyword>
<keyword id="KW-0862">Zinc</keyword>
<keyword id="KW-0863">Zinc-finger</keyword>
<proteinExistence type="evidence at transcript level"/>
<sequence length="177" mass="19463">MSSNECFKCGRSGHWARECPTGGGRGRGMRSRGRGGFTSDRGFQFVSSSLPDICYRCGESGHLAKDCDLQEDACYNCGRGGHIAKDCKEPKREREQCCYNCGKPGHLARDCDHADEQKCYSCGEFGHIQKDCTKVKCYRCGETGHVAINCSKTSEVNCYRCGESGHLARECTIEATA</sequence>
<evidence type="ECO:0000250" key="1">
    <source>
        <dbReference type="UniProtKB" id="P53996"/>
    </source>
</evidence>
<evidence type="ECO:0000250" key="2">
    <source>
        <dbReference type="UniProtKB" id="P62633"/>
    </source>
</evidence>
<evidence type="ECO:0000250" key="3">
    <source>
        <dbReference type="UniProtKB" id="P62634"/>
    </source>
</evidence>
<evidence type="ECO:0000255" key="4">
    <source>
        <dbReference type="PROSITE-ProRule" id="PRU00047"/>
    </source>
</evidence>
<evidence type="ECO:0000305" key="5"/>
<comment type="function">
    <text evidence="1 2 3">Single-stranded DNA-binding protein that preferentially binds to the sterol regulatory element (SRE) sequence 5'-GTGCGGTG-3', and thereby mediates transcriptional repression (By similarity). Has a role as transactivator of the Myc promoter (By similarity). Binds single-stranded RNA in a sequence-specific manner (By similarity). Binds G-rich elements in target mRNA coding sequences (By similarity). Prevents G-quadruplex structure formation in vitro, suggesting a role in supporting translation by resolving stable structures on mRNAs (By similarity).</text>
</comment>
<comment type="subunit">
    <text evidence="2">Associates with the 40S ribosomal subunit, the 80S ribosome and with polysomes.</text>
</comment>
<comment type="subcellular location">
    <subcellularLocation>
        <location evidence="1">Nucleus</location>
    </subcellularLocation>
    <subcellularLocation>
        <location evidence="2">Cytoplasm</location>
    </subcellularLocation>
    <subcellularLocation>
        <location evidence="1">Endoplasmic reticulum</location>
    </subcellularLocation>
</comment>
<comment type="PTM">
    <text evidence="2">Arginine methylation by PRMT1 in the Arg/Gly-rich region impedes RNA binding.</text>
</comment>